<evidence type="ECO:0000250" key="1"/>
<evidence type="ECO:0000305" key="2"/>
<keyword id="KW-0963">Cytoplasm</keyword>
<keyword id="KW-0235">DNA replication</keyword>
<keyword id="KW-0239">DNA-directed DNA polymerase</keyword>
<keyword id="KW-0548">Nucleotidyltransferase</keyword>
<keyword id="KW-1185">Reference proteome</keyword>
<keyword id="KW-0808">Transferase</keyword>
<sequence>MKENKAFTHLHLHTEYSLLDGANKIKILAKRVKELGMKSVSVTDHGNMFGAIDFYTSMKKEGIKPIIGMEAYIHNDDNLSSKETKQRFHLCLFAKNQEGYENLMFLSSMAYLEGFYYFPRINKKLLKEHSKGIIASSACLQGEVNYHLNTNNERNRKYGAKGYDEAKKIACEYQEIFEDDFYLEIMRHGILDQRFIDEQVIKMSLETGLKIIATNDTHYTMPNDAKAQEVAMCVAMGKTLNDKGRLKHSVHEFYIKSPEEMAKLFADIPEALENTQEIADKCVLEIDLKDDKKNPPTPPSFKFTKAYAQNEGLNFEDDASYFAYKAREGLKERLVLVPKEKHDQYKERLEKEIEVITNMKFPGYMLIVWDFIRYAKEMGIPVGPGRGSAAGSLVAFALKITDIDPLKYDLLFERFLNPERISMPDIDTDFCQRRRKEIIEYMIEKYGKYNVAQVITFNKMLAKGVIRDVARVLDMPYKEADDFAKLIPNRLGITLKGYEKNGEFIEGAWELEPKIKELVESNELAKQVWEYSLNLENLNRNAGVHAAALVVDSQKELWHKTPLFASEKTGGIVTQYSMKYLEPVDLIKFDFLGLKTLTVIDDALKIIKTQHKISVDFLSLDMDDPKVYKTIQSGDTVGIFQIESGMFQGLNKRLRPSSFEDIIAIIALGRPGPMESGMVDDFVNRKHGVEPIAYAFKELEPILKPTYGTIVYQEQVMQIVQTIGGFSLGEADLIRRAMGKKDAQIMADNKAKFVEGAKNLGHDGQKAANLWDLIVKFAGYGFNKSHSAAYAMITFQTAYLKTYYKHEFMAAMLTSESNKIESVARYIDEVRALEIEVMPPHINSSMQDFSVAEFKNQKGELEKKIVFGLGAIKGVGGEPIKNIIEERAKGDYKSLEDFISRVDFSKLTKKSLEPLVKSGSLDNLGYTRKTMLANLDLICDAGRAKDKANEMMQGGNSLFGAMEGGTKEQVVLDMIDLGEHDAKTLLECEYETLGIHVSGNPLDEFKEEIKGFKNLVKSIDIEELEIGSQAYLLGKIMEVKKKIGKRSGKPYGIADILDRYGKFELMLFEKQLNALEELDINKPLVFKCKIEEQEEVVRLRLFEILDLESAREVKIPKARYKDPEKQKEEVREIPPMEMLASSSCSLAIVLENDVKKEFLRQIKESALKHQGKRPLYLIIKDKDKQFKIQSDLMVNEKIKDDFKGLEWRDLA</sequence>
<dbReference type="EC" id="2.7.7.7"/>
<dbReference type="EMBL" id="AE000511">
    <property type="protein sequence ID" value="AAD08502.1"/>
    <property type="molecule type" value="Genomic_DNA"/>
</dbReference>
<dbReference type="PIR" id="D64702">
    <property type="entry name" value="D64702"/>
</dbReference>
<dbReference type="RefSeq" id="NP_208251.1">
    <property type="nucleotide sequence ID" value="NC_000915.1"/>
</dbReference>
<dbReference type="RefSeq" id="WP_000662171.1">
    <property type="nucleotide sequence ID" value="NC_018939.1"/>
</dbReference>
<dbReference type="SMR" id="P56157"/>
<dbReference type="DIP" id="DIP-3526N"/>
<dbReference type="FunCoup" id="P56157">
    <property type="interactions" value="269"/>
</dbReference>
<dbReference type="IntAct" id="P56157">
    <property type="interactions" value="4"/>
</dbReference>
<dbReference type="MINT" id="P56157"/>
<dbReference type="STRING" id="85962.HP_1460"/>
<dbReference type="PaxDb" id="85962-C694_07560"/>
<dbReference type="EnsemblBacteria" id="AAD08502">
    <property type="protein sequence ID" value="AAD08502"/>
    <property type="gene ID" value="HP_1460"/>
</dbReference>
<dbReference type="KEGG" id="heo:C694_07560"/>
<dbReference type="KEGG" id="hpy:HP_1460"/>
<dbReference type="PATRIC" id="fig|85962.47.peg.1571"/>
<dbReference type="eggNOG" id="COG0587">
    <property type="taxonomic scope" value="Bacteria"/>
</dbReference>
<dbReference type="InParanoid" id="P56157"/>
<dbReference type="OrthoDB" id="9803237at2"/>
<dbReference type="PhylomeDB" id="P56157"/>
<dbReference type="Proteomes" id="UP000000429">
    <property type="component" value="Chromosome"/>
</dbReference>
<dbReference type="GO" id="GO:0005737">
    <property type="term" value="C:cytoplasm"/>
    <property type="evidence" value="ECO:0007669"/>
    <property type="project" value="UniProtKB-SubCell"/>
</dbReference>
<dbReference type="GO" id="GO:0008408">
    <property type="term" value="F:3'-5' exonuclease activity"/>
    <property type="evidence" value="ECO:0007669"/>
    <property type="project" value="InterPro"/>
</dbReference>
<dbReference type="GO" id="GO:0003887">
    <property type="term" value="F:DNA-directed DNA polymerase activity"/>
    <property type="evidence" value="ECO:0000318"/>
    <property type="project" value="GO_Central"/>
</dbReference>
<dbReference type="GO" id="GO:0006260">
    <property type="term" value="P:DNA replication"/>
    <property type="evidence" value="ECO:0007669"/>
    <property type="project" value="UniProtKB-KW"/>
</dbReference>
<dbReference type="CDD" id="cd04485">
    <property type="entry name" value="DnaE_OBF"/>
    <property type="match status" value="1"/>
</dbReference>
<dbReference type="CDD" id="cd12113">
    <property type="entry name" value="PHP_PolIIIA_DnaE3"/>
    <property type="match status" value="1"/>
</dbReference>
<dbReference type="Gene3D" id="1.10.150.870">
    <property type="match status" value="1"/>
</dbReference>
<dbReference type="Gene3D" id="1.10.10.1600">
    <property type="entry name" value="Bacterial DNA polymerase III alpha subunit, thumb domain"/>
    <property type="match status" value="1"/>
</dbReference>
<dbReference type="Gene3D" id="3.20.20.140">
    <property type="entry name" value="Metal-dependent hydrolases"/>
    <property type="match status" value="1"/>
</dbReference>
<dbReference type="InterPro" id="IPR011708">
    <property type="entry name" value="DNA_pol3_alpha_NTPase_dom"/>
</dbReference>
<dbReference type="InterPro" id="IPR041931">
    <property type="entry name" value="DNA_pol3_alpha_thumb_dom"/>
</dbReference>
<dbReference type="InterPro" id="IPR040982">
    <property type="entry name" value="DNA_pol3_finger"/>
</dbReference>
<dbReference type="InterPro" id="IPR004805">
    <property type="entry name" value="DnaE2/DnaE/PolC"/>
</dbReference>
<dbReference type="InterPro" id="IPR029460">
    <property type="entry name" value="DNAPol_HHH"/>
</dbReference>
<dbReference type="InterPro" id="IPR004013">
    <property type="entry name" value="PHP_dom"/>
</dbReference>
<dbReference type="InterPro" id="IPR003141">
    <property type="entry name" value="Pol/His_phosphatase_N"/>
</dbReference>
<dbReference type="InterPro" id="IPR016195">
    <property type="entry name" value="Pol/histidinol_Pase-like"/>
</dbReference>
<dbReference type="NCBIfam" id="TIGR00594">
    <property type="entry name" value="polc"/>
    <property type="match status" value="1"/>
</dbReference>
<dbReference type="NCBIfam" id="NF004226">
    <property type="entry name" value="PRK05673.1"/>
    <property type="match status" value="1"/>
</dbReference>
<dbReference type="PANTHER" id="PTHR32294">
    <property type="entry name" value="DNA POLYMERASE III SUBUNIT ALPHA"/>
    <property type="match status" value="1"/>
</dbReference>
<dbReference type="PANTHER" id="PTHR32294:SF0">
    <property type="entry name" value="DNA POLYMERASE III SUBUNIT ALPHA"/>
    <property type="match status" value="1"/>
</dbReference>
<dbReference type="Pfam" id="PF07733">
    <property type="entry name" value="DNA_pol3_alpha"/>
    <property type="match status" value="1"/>
</dbReference>
<dbReference type="Pfam" id="PF17657">
    <property type="entry name" value="DNA_pol3_finger"/>
    <property type="match status" value="1"/>
</dbReference>
<dbReference type="Pfam" id="PF14579">
    <property type="entry name" value="HHH_6"/>
    <property type="match status" value="1"/>
</dbReference>
<dbReference type="Pfam" id="PF02811">
    <property type="entry name" value="PHP"/>
    <property type="match status" value="1"/>
</dbReference>
<dbReference type="SMART" id="SM00481">
    <property type="entry name" value="POLIIIAc"/>
    <property type="match status" value="1"/>
</dbReference>
<dbReference type="SUPFAM" id="SSF160975">
    <property type="entry name" value="AF1531-like"/>
    <property type="match status" value="1"/>
</dbReference>
<dbReference type="SUPFAM" id="SSF89550">
    <property type="entry name" value="PHP domain-like"/>
    <property type="match status" value="1"/>
</dbReference>
<comment type="function">
    <text evidence="1">DNA polymerase III is a complex, multichain enzyme responsible for most of the replicative synthesis in bacteria. This DNA polymerase also exhibits 3' to 5' exonuclease activity. The alpha chain is the DNA polymerase (By similarity).</text>
</comment>
<comment type="catalytic activity">
    <reaction>
        <text>DNA(n) + a 2'-deoxyribonucleoside 5'-triphosphate = DNA(n+1) + diphosphate</text>
        <dbReference type="Rhea" id="RHEA:22508"/>
        <dbReference type="Rhea" id="RHEA-COMP:17339"/>
        <dbReference type="Rhea" id="RHEA-COMP:17340"/>
        <dbReference type="ChEBI" id="CHEBI:33019"/>
        <dbReference type="ChEBI" id="CHEBI:61560"/>
        <dbReference type="ChEBI" id="CHEBI:173112"/>
        <dbReference type="EC" id="2.7.7.7"/>
    </reaction>
</comment>
<comment type="subunit">
    <text evidence="1">DNA polymerase III contains a core (composed of alpha, epsilon and theta chains) that associates with a tau subunit. This core dimerizes to form the PolIII' complex. PolIII' associates with the gamma complex (composed of gamma, delta, delta', psi and chi chains) and with the beta chain to form the complete DNA polymerase III complex (By similarity).</text>
</comment>
<comment type="subcellular location">
    <subcellularLocation>
        <location evidence="1">Cytoplasm</location>
    </subcellularLocation>
</comment>
<comment type="similarity">
    <text evidence="2">Belongs to the DNA polymerase type-C family. DnaE subfamily.</text>
</comment>
<organism>
    <name type="scientific">Helicobacter pylori (strain ATCC 700392 / 26695)</name>
    <name type="common">Campylobacter pylori</name>
    <dbReference type="NCBI Taxonomy" id="85962"/>
    <lineage>
        <taxon>Bacteria</taxon>
        <taxon>Pseudomonadati</taxon>
        <taxon>Campylobacterota</taxon>
        <taxon>Epsilonproteobacteria</taxon>
        <taxon>Campylobacterales</taxon>
        <taxon>Helicobacteraceae</taxon>
        <taxon>Helicobacter</taxon>
    </lineage>
</organism>
<reference key="1">
    <citation type="journal article" date="1997" name="Nature">
        <title>The complete genome sequence of the gastric pathogen Helicobacter pylori.</title>
        <authorList>
            <person name="Tomb J.-F."/>
            <person name="White O."/>
            <person name="Kerlavage A.R."/>
            <person name="Clayton R.A."/>
            <person name="Sutton G.G."/>
            <person name="Fleischmann R.D."/>
            <person name="Ketchum K.A."/>
            <person name="Klenk H.-P."/>
            <person name="Gill S.R."/>
            <person name="Dougherty B.A."/>
            <person name="Nelson K.E."/>
            <person name="Quackenbush J."/>
            <person name="Zhou L."/>
            <person name="Kirkness E.F."/>
            <person name="Peterson S.N."/>
            <person name="Loftus B.J."/>
            <person name="Richardson D.L."/>
            <person name="Dodson R.J."/>
            <person name="Khalak H.G."/>
            <person name="Glodek A."/>
            <person name="McKenney K."/>
            <person name="FitzGerald L.M."/>
            <person name="Lee N."/>
            <person name="Adams M.D."/>
            <person name="Hickey E.K."/>
            <person name="Berg D.E."/>
            <person name="Gocayne J.D."/>
            <person name="Utterback T.R."/>
            <person name="Peterson J.D."/>
            <person name="Kelley J.M."/>
            <person name="Cotton M.D."/>
            <person name="Weidman J.F."/>
            <person name="Fujii C."/>
            <person name="Bowman C."/>
            <person name="Watthey L."/>
            <person name="Wallin E."/>
            <person name="Hayes W.S."/>
            <person name="Borodovsky M."/>
            <person name="Karp P.D."/>
            <person name="Smith H.O."/>
            <person name="Fraser C.M."/>
            <person name="Venter J.C."/>
        </authorList>
    </citation>
    <scope>NUCLEOTIDE SEQUENCE [LARGE SCALE GENOMIC DNA]</scope>
    <source>
        <strain>ATCC 700392 / 26695</strain>
    </source>
</reference>
<protein>
    <recommendedName>
        <fullName>DNA polymerase III subunit alpha</fullName>
        <ecNumber>2.7.7.7</ecNumber>
    </recommendedName>
</protein>
<feature type="chain" id="PRO_0000103323" description="DNA polymerase III subunit alpha">
    <location>
        <begin position="1"/>
        <end position="1211"/>
    </location>
</feature>
<name>DPO3A_HELPY</name>
<proteinExistence type="inferred from homology"/>
<accession>P56157</accession>
<gene>
    <name type="primary">dnaE</name>
    <name type="ordered locus">HP_1460</name>
</gene>